<dbReference type="EC" id="3.2.1.26"/>
<dbReference type="EMBL" id="M27273">
    <property type="protein sequence ID" value="AAA24499.1"/>
    <property type="molecule type" value="Genomic_DNA"/>
</dbReference>
<dbReference type="PIR" id="C43717">
    <property type="entry name" value="C43717"/>
</dbReference>
<dbReference type="RefSeq" id="WP_000813695.1">
    <property type="nucleotide sequence ID" value="NZ_QZWA01000078.1"/>
</dbReference>
<dbReference type="SMR" id="P16553"/>
<dbReference type="CAZy" id="GH32">
    <property type="family name" value="Glycoside Hydrolase Family 32"/>
</dbReference>
<dbReference type="GO" id="GO:0005737">
    <property type="term" value="C:cytoplasm"/>
    <property type="evidence" value="ECO:0007669"/>
    <property type="project" value="InterPro"/>
</dbReference>
<dbReference type="GO" id="GO:0004564">
    <property type="term" value="F:beta-fructofuranosidase activity"/>
    <property type="evidence" value="ECO:0007669"/>
    <property type="project" value="UniProtKB-EC"/>
</dbReference>
<dbReference type="GO" id="GO:0005975">
    <property type="term" value="P:carbohydrate metabolic process"/>
    <property type="evidence" value="ECO:0007669"/>
    <property type="project" value="InterPro"/>
</dbReference>
<dbReference type="CDD" id="cd08996">
    <property type="entry name" value="GH32_FFase"/>
    <property type="match status" value="1"/>
</dbReference>
<dbReference type="Gene3D" id="2.60.120.560">
    <property type="entry name" value="Exo-inulinase, domain 1"/>
    <property type="match status" value="1"/>
</dbReference>
<dbReference type="Gene3D" id="2.115.10.20">
    <property type="entry name" value="Glycosyl hydrolase domain, family 43"/>
    <property type="match status" value="1"/>
</dbReference>
<dbReference type="InterPro" id="IPR013320">
    <property type="entry name" value="ConA-like_dom_sf"/>
</dbReference>
<dbReference type="InterPro" id="IPR051214">
    <property type="entry name" value="GH32_Enzymes"/>
</dbReference>
<dbReference type="InterPro" id="IPR001362">
    <property type="entry name" value="Glyco_hydro_32"/>
</dbReference>
<dbReference type="InterPro" id="IPR018053">
    <property type="entry name" value="Glyco_hydro_32_AS"/>
</dbReference>
<dbReference type="InterPro" id="IPR013189">
    <property type="entry name" value="Glyco_hydro_32_C"/>
</dbReference>
<dbReference type="InterPro" id="IPR013148">
    <property type="entry name" value="Glyco_hydro_32_N"/>
</dbReference>
<dbReference type="InterPro" id="IPR023296">
    <property type="entry name" value="Glyco_hydro_beta-prop_sf"/>
</dbReference>
<dbReference type="InterPro" id="IPR006232">
    <property type="entry name" value="Suc6P_hydrolase"/>
</dbReference>
<dbReference type="NCBIfam" id="TIGR01322">
    <property type="entry name" value="scrB_fam"/>
    <property type="match status" value="1"/>
</dbReference>
<dbReference type="PANTHER" id="PTHR43101">
    <property type="entry name" value="BETA-FRUCTOSIDASE"/>
    <property type="match status" value="1"/>
</dbReference>
<dbReference type="PANTHER" id="PTHR43101:SF1">
    <property type="entry name" value="BETA-FRUCTOSIDASE"/>
    <property type="match status" value="1"/>
</dbReference>
<dbReference type="Pfam" id="PF08244">
    <property type="entry name" value="Glyco_hydro_32C"/>
    <property type="match status" value="1"/>
</dbReference>
<dbReference type="Pfam" id="PF00251">
    <property type="entry name" value="Glyco_hydro_32N"/>
    <property type="match status" value="1"/>
</dbReference>
<dbReference type="SMART" id="SM00640">
    <property type="entry name" value="Glyco_32"/>
    <property type="match status" value="1"/>
</dbReference>
<dbReference type="SUPFAM" id="SSF75005">
    <property type="entry name" value="Arabinanase/levansucrase/invertase"/>
    <property type="match status" value="1"/>
</dbReference>
<dbReference type="SUPFAM" id="SSF49899">
    <property type="entry name" value="Concanavalin A-like lectins/glucanases"/>
    <property type="match status" value="1"/>
</dbReference>
<dbReference type="PROSITE" id="PS00609">
    <property type="entry name" value="GLYCOSYL_HYDROL_F32"/>
    <property type="match status" value="1"/>
</dbReference>
<protein>
    <recommendedName>
        <fullName>Raffinose invertase</fullName>
        <shortName>Invertase</shortName>
        <ecNumber>3.2.1.26</ecNumber>
    </recommendedName>
</protein>
<feature type="chain" id="PRO_0000169869" description="Raffinose invertase">
    <location>
        <begin position="1"/>
        <end position="476"/>
    </location>
</feature>
<feature type="active site" evidence="2">
    <location>
        <position position="38"/>
    </location>
</feature>
<feature type="binding site" evidence="1">
    <location>
        <begin position="35"/>
        <end position="38"/>
    </location>
    <ligand>
        <name>substrate</name>
    </ligand>
</feature>
<feature type="binding site" evidence="1">
    <location>
        <position position="54"/>
    </location>
    <ligand>
        <name>substrate</name>
    </ligand>
</feature>
<feature type="binding site" evidence="1">
    <location>
        <begin position="97"/>
        <end position="98"/>
    </location>
    <ligand>
        <name>substrate</name>
    </ligand>
</feature>
<feature type="binding site" evidence="1">
    <location>
        <begin position="159"/>
        <end position="160"/>
    </location>
    <ligand>
        <name>substrate</name>
    </ligand>
</feature>
<feature type="binding site" evidence="1">
    <location>
        <position position="214"/>
    </location>
    <ligand>
        <name>substrate</name>
    </ligand>
</feature>
<feature type="binding site" evidence="1">
    <location>
        <position position="297"/>
    </location>
    <ligand>
        <name>substrate</name>
    </ligand>
</feature>
<accession>P16553</accession>
<sequence length="476" mass="54327">MKQRLSLAQSALEKLSARRGNTWYPIFHLAPPAGWMNDPNGLIYFNGRYHAFFQHHPASAYQGPMHWGHATSTDMLHWQHELVALAPGDKYDRDGCFSGSAVDDDGVLSLIYTGHICLEDRGNDSIIREVQCLATSHDGIRFEKQGCVLTPPEGIMHFRDPKVWHEDGSWWMVIGARDASDNGQVLLYRGTSLRDWHLEHVLAHSAAGESYMWECPDFFRCGNFHWLMFSPQGMNPSGYRFRNLFQSGVLAGNWKPGSVFALKGVFEELDYGHDFYAPQSMLAEDGRRIIMAWMNMWDSPVPTRSEAWAGCLTLPREVFERDGRLCQRPVREVESLRRKCQPLSPVRLHGVQLLTENVQAAELLVTWHTVDSHAEHYGIRLGEGLRFYVDNQAGRLILWRYYPEEGLDGYRSVELPDTEYLTLRIFLDRSSVEVFVNDGEATLSSRIYPQADSRQLSLYAAHGDAILTDGTLWMLT</sequence>
<geneLocation type="plasmid">
    <name>pRSD2</name>
</geneLocation>
<comment type="function">
    <text>May prevent the potential hasard of excessive sucrose accumulation.</text>
</comment>
<comment type="catalytic activity">
    <reaction evidence="2">
        <text>Hydrolysis of terminal non-reducing beta-D-fructofuranoside residues in beta-D-fructofuranosides.</text>
        <dbReference type="EC" id="3.2.1.26"/>
    </reaction>
</comment>
<comment type="subunit">
    <text>Homodimer.</text>
</comment>
<comment type="similarity">
    <text evidence="3">Belongs to the glycosyl hydrolase 32 family.</text>
</comment>
<proteinExistence type="inferred from homology"/>
<reference key="1">
    <citation type="journal article" date="1989" name="J. Bacteriol.">
        <title>Nucleotide sequences and operon structure of plasmid-borne genes mediating uptake and utilization of raffinose in Escherichia coli.</title>
        <authorList>
            <person name="Aslanidis C."/>
            <person name="Schmid K."/>
            <person name="Schmitt R."/>
        </authorList>
    </citation>
    <scope>NUCLEOTIDE SEQUENCE [GENOMIC DNA]</scope>
</reference>
<gene>
    <name type="primary">rafD</name>
</gene>
<evidence type="ECO:0000250" key="1"/>
<evidence type="ECO:0000255" key="2">
    <source>
        <dbReference type="PROSITE-ProRule" id="PRU10067"/>
    </source>
</evidence>
<evidence type="ECO:0000305" key="3"/>
<keyword id="KW-0326">Glycosidase</keyword>
<keyword id="KW-0378">Hydrolase</keyword>
<keyword id="KW-0614">Plasmid</keyword>
<organism>
    <name type="scientific">Escherichia coli</name>
    <dbReference type="NCBI Taxonomy" id="562"/>
    <lineage>
        <taxon>Bacteria</taxon>
        <taxon>Pseudomonadati</taxon>
        <taxon>Pseudomonadota</taxon>
        <taxon>Gammaproteobacteria</taxon>
        <taxon>Enterobacterales</taxon>
        <taxon>Enterobacteriaceae</taxon>
        <taxon>Escherichia</taxon>
    </lineage>
</organism>
<name>RAFD_ECOLX</name>